<evidence type="ECO:0000250" key="1"/>
<evidence type="ECO:0000255" key="2"/>
<evidence type="ECO:0000255" key="3">
    <source>
        <dbReference type="PROSITE-ProRule" id="PRU10031"/>
    </source>
</evidence>
<evidence type="ECO:0000255" key="4">
    <source>
        <dbReference type="PROSITE-ProRule" id="PRU10032"/>
    </source>
</evidence>
<evidence type="ECO:0000256" key="5">
    <source>
        <dbReference type="SAM" id="MobiDB-lite"/>
    </source>
</evidence>
<evidence type="ECO:0000305" key="6"/>
<comment type="function">
    <text>DNA-dependent RNA polymerase catalyzes the transcription of DNA into RNA using the four ribonucleoside triphosphates as substrates.</text>
</comment>
<comment type="catalytic activity">
    <reaction evidence="3 4">
        <text>RNA(n) + a ribonucleoside 5'-triphosphate = RNA(n+1) + diphosphate</text>
        <dbReference type="Rhea" id="RHEA:21248"/>
        <dbReference type="Rhea" id="RHEA-COMP:14527"/>
        <dbReference type="Rhea" id="RHEA-COMP:17342"/>
        <dbReference type="ChEBI" id="CHEBI:33019"/>
        <dbReference type="ChEBI" id="CHEBI:61557"/>
        <dbReference type="ChEBI" id="CHEBI:140395"/>
        <dbReference type="EC" id="2.7.7.6"/>
    </reaction>
</comment>
<comment type="subcellular location">
    <subcellularLocation>
        <location>Mitochondrion</location>
    </subcellularLocation>
</comment>
<comment type="similarity">
    <text evidence="6">Belongs to the phage and mitochondrial RNA polymerase family.</text>
</comment>
<proteinExistence type="inferred from homology"/>
<gene>
    <name type="primary">cyt-5</name>
    <name type="ORF">NCU06308</name>
</gene>
<accession>P38671</accession>
<accession>Q7RVH0</accession>
<organism>
    <name type="scientific">Neurospora crassa (strain ATCC 24698 / 74-OR23-1A / CBS 708.71 / DSM 1257 / FGSC 987)</name>
    <dbReference type="NCBI Taxonomy" id="367110"/>
    <lineage>
        <taxon>Eukaryota</taxon>
        <taxon>Fungi</taxon>
        <taxon>Dikarya</taxon>
        <taxon>Ascomycota</taxon>
        <taxon>Pezizomycotina</taxon>
        <taxon>Sordariomycetes</taxon>
        <taxon>Sordariomycetidae</taxon>
        <taxon>Sordariales</taxon>
        <taxon>Sordariaceae</taxon>
        <taxon>Neurospora</taxon>
    </lineage>
</organism>
<keyword id="KW-0240">DNA-directed RNA polymerase</keyword>
<keyword id="KW-0496">Mitochondrion</keyword>
<keyword id="KW-0548">Nucleotidyltransferase</keyword>
<keyword id="KW-1185">Reference proteome</keyword>
<keyword id="KW-0804">Transcription</keyword>
<keyword id="KW-0808">Transferase</keyword>
<keyword id="KW-0809">Transit peptide</keyword>
<reference key="1">
    <citation type="journal article" date="1996" name="J. Biol. Chem.">
        <title>Cloning and characterization of the Neurospora crassa cyt-5 gene. A nuclear-coded mitochondrial RNA polymerase with a polyglutamine repeat.</title>
        <authorList>
            <person name="Chen B."/>
            <person name="Kubelik A.R."/>
            <person name="Mohr S."/>
            <person name="Breitenberger C.A."/>
        </authorList>
    </citation>
    <scope>NUCLEOTIDE SEQUENCE [GENOMIC DNA]</scope>
    <source>
        <strain>ATCC 24698 / 74-OR23-1A / CBS 708.71 / DSM 1257 / FGSC 987</strain>
    </source>
</reference>
<reference key="2">
    <citation type="journal article" date="2003" name="Nature">
        <title>The genome sequence of the filamentous fungus Neurospora crassa.</title>
        <authorList>
            <person name="Galagan J.E."/>
            <person name="Calvo S.E."/>
            <person name="Borkovich K.A."/>
            <person name="Selker E.U."/>
            <person name="Read N.D."/>
            <person name="Jaffe D.B."/>
            <person name="FitzHugh W."/>
            <person name="Ma L.-J."/>
            <person name="Smirnov S."/>
            <person name="Purcell S."/>
            <person name="Rehman B."/>
            <person name="Elkins T."/>
            <person name="Engels R."/>
            <person name="Wang S."/>
            <person name="Nielsen C.B."/>
            <person name="Butler J."/>
            <person name="Endrizzi M."/>
            <person name="Qui D."/>
            <person name="Ianakiev P."/>
            <person name="Bell-Pedersen D."/>
            <person name="Nelson M.A."/>
            <person name="Werner-Washburne M."/>
            <person name="Selitrennikoff C.P."/>
            <person name="Kinsey J.A."/>
            <person name="Braun E.L."/>
            <person name="Zelter A."/>
            <person name="Schulte U."/>
            <person name="Kothe G.O."/>
            <person name="Jedd G."/>
            <person name="Mewes H.-W."/>
            <person name="Staben C."/>
            <person name="Marcotte E."/>
            <person name="Greenberg D."/>
            <person name="Roy A."/>
            <person name="Foley K."/>
            <person name="Naylor J."/>
            <person name="Stange-Thomann N."/>
            <person name="Barrett R."/>
            <person name="Gnerre S."/>
            <person name="Kamal M."/>
            <person name="Kamvysselis M."/>
            <person name="Mauceli E.W."/>
            <person name="Bielke C."/>
            <person name="Rudd S."/>
            <person name="Frishman D."/>
            <person name="Krystofova S."/>
            <person name="Rasmussen C."/>
            <person name="Metzenberg R.L."/>
            <person name="Perkins D.D."/>
            <person name="Kroken S."/>
            <person name="Cogoni C."/>
            <person name="Macino G."/>
            <person name="Catcheside D.E.A."/>
            <person name="Li W."/>
            <person name="Pratt R.J."/>
            <person name="Osmani S.A."/>
            <person name="DeSouza C.P.C."/>
            <person name="Glass N.L."/>
            <person name="Orbach M.J."/>
            <person name="Berglund J.A."/>
            <person name="Voelker R."/>
            <person name="Yarden O."/>
            <person name="Plamann M."/>
            <person name="Seiler S."/>
            <person name="Dunlap J.C."/>
            <person name="Radford A."/>
            <person name="Aramayo R."/>
            <person name="Natvig D.O."/>
            <person name="Alex L.A."/>
            <person name="Mannhaupt G."/>
            <person name="Ebbole D.J."/>
            <person name="Freitag M."/>
            <person name="Paulsen I."/>
            <person name="Sachs M.S."/>
            <person name="Lander E.S."/>
            <person name="Nusbaum C."/>
            <person name="Birren B.W."/>
        </authorList>
    </citation>
    <scope>NUCLEOTIDE SEQUENCE [LARGE SCALE GENOMIC DNA]</scope>
    <source>
        <strain>ATCC 24698 / 74-OR23-1A / CBS 708.71 / DSM 1257 / FGSC 987</strain>
    </source>
</reference>
<name>RPOM_NEUCR</name>
<dbReference type="EC" id="2.7.7.6"/>
<dbReference type="EMBL" id="L25087">
    <property type="protein sequence ID" value="AAA33587.1"/>
    <property type="molecule type" value="Genomic_DNA"/>
</dbReference>
<dbReference type="EMBL" id="CM002239">
    <property type="protein sequence ID" value="EAA33334.3"/>
    <property type="molecule type" value="Genomic_DNA"/>
</dbReference>
<dbReference type="PIR" id="T18363">
    <property type="entry name" value="T18363"/>
</dbReference>
<dbReference type="RefSeq" id="XP_962570.3">
    <property type="nucleotide sequence ID" value="XM_957477.3"/>
</dbReference>
<dbReference type="SMR" id="P38671"/>
<dbReference type="FunCoup" id="P38671">
    <property type="interactions" value="234"/>
</dbReference>
<dbReference type="STRING" id="367110.P38671"/>
<dbReference type="PaxDb" id="5141-EFNCRP00000006114"/>
<dbReference type="EnsemblFungi" id="EAA33334">
    <property type="protein sequence ID" value="EAA33334"/>
    <property type="gene ID" value="NCU06308"/>
</dbReference>
<dbReference type="GeneID" id="3878704"/>
<dbReference type="KEGG" id="ncr:NCU06308"/>
<dbReference type="VEuPathDB" id="FungiDB:NCU06308"/>
<dbReference type="HOGENOM" id="CLU_003364_1_0_1"/>
<dbReference type="InParanoid" id="P38671"/>
<dbReference type="OrthoDB" id="276422at2759"/>
<dbReference type="Proteomes" id="UP000001805">
    <property type="component" value="Chromosome 4, Linkage Group IV"/>
</dbReference>
<dbReference type="GO" id="GO:0034245">
    <property type="term" value="C:mitochondrial DNA-directed RNA polymerase complex"/>
    <property type="evidence" value="ECO:0000318"/>
    <property type="project" value="GO_Central"/>
</dbReference>
<dbReference type="GO" id="GO:0003899">
    <property type="term" value="F:DNA-directed RNA polymerase activity"/>
    <property type="evidence" value="ECO:0000318"/>
    <property type="project" value="GO_Central"/>
</dbReference>
<dbReference type="GO" id="GO:0001018">
    <property type="term" value="F:mitochondrial promoter sequence-specific DNA binding"/>
    <property type="evidence" value="ECO:0000318"/>
    <property type="project" value="GO_Central"/>
</dbReference>
<dbReference type="GO" id="GO:0006390">
    <property type="term" value="P:mitochondrial transcription"/>
    <property type="evidence" value="ECO:0000318"/>
    <property type="project" value="GO_Central"/>
</dbReference>
<dbReference type="FunFam" id="1.10.150.20:FF:000041">
    <property type="entry name" value="DNA-directed RNA polymerase"/>
    <property type="match status" value="1"/>
</dbReference>
<dbReference type="FunFam" id="1.10.287.280:FF:000001">
    <property type="entry name" value="DNA-directed RNA polymerase"/>
    <property type="match status" value="1"/>
</dbReference>
<dbReference type="Gene3D" id="1.10.287.260">
    <property type="match status" value="1"/>
</dbReference>
<dbReference type="Gene3D" id="1.10.287.280">
    <property type="match status" value="1"/>
</dbReference>
<dbReference type="Gene3D" id="1.10.150.20">
    <property type="entry name" value="5' to 3' exonuclease, C-terminal subdomain"/>
    <property type="match status" value="1"/>
</dbReference>
<dbReference type="Gene3D" id="1.10.1320.10">
    <property type="entry name" value="DNA-directed RNA polymerase, N-terminal domain"/>
    <property type="match status" value="1"/>
</dbReference>
<dbReference type="InterPro" id="IPR024075">
    <property type="entry name" value="DNA-dir_RNA_pol_helix_hairp_sf"/>
</dbReference>
<dbReference type="InterPro" id="IPR046950">
    <property type="entry name" value="DNA-dir_Rpol_C_phage-type"/>
</dbReference>
<dbReference type="InterPro" id="IPR002092">
    <property type="entry name" value="DNA-dir_Rpol_phage-type"/>
</dbReference>
<dbReference type="InterPro" id="IPR043502">
    <property type="entry name" value="DNA/RNA_pol_sf"/>
</dbReference>
<dbReference type="InterPro" id="IPR037159">
    <property type="entry name" value="RNA_POL_N_sf"/>
</dbReference>
<dbReference type="InterPro" id="IPR029262">
    <property type="entry name" value="RPOL_N"/>
</dbReference>
<dbReference type="PANTHER" id="PTHR10102">
    <property type="entry name" value="DNA-DIRECTED RNA POLYMERASE, MITOCHONDRIAL"/>
    <property type="match status" value="1"/>
</dbReference>
<dbReference type="PANTHER" id="PTHR10102:SF0">
    <property type="entry name" value="DNA-DIRECTED RNA POLYMERASE, MITOCHONDRIAL"/>
    <property type="match status" value="1"/>
</dbReference>
<dbReference type="Pfam" id="PF00940">
    <property type="entry name" value="RNA_pol"/>
    <property type="match status" value="1"/>
</dbReference>
<dbReference type="Pfam" id="PF14700">
    <property type="entry name" value="RPOL_N"/>
    <property type="match status" value="1"/>
</dbReference>
<dbReference type="SMART" id="SM01311">
    <property type="entry name" value="RPOL_N"/>
    <property type="match status" value="1"/>
</dbReference>
<dbReference type="SUPFAM" id="SSF56672">
    <property type="entry name" value="DNA/RNA polymerases"/>
    <property type="match status" value="1"/>
</dbReference>
<dbReference type="PROSITE" id="PS00900">
    <property type="entry name" value="RNA_POL_PHAGE_1"/>
    <property type="match status" value="1"/>
</dbReference>
<dbReference type="PROSITE" id="PS00489">
    <property type="entry name" value="RNA_POL_PHAGE_2"/>
    <property type="match status" value="1"/>
</dbReference>
<protein>
    <recommendedName>
        <fullName>DNA-directed RNA polymerase, mitochondrial</fullName>
        <ecNumber>2.7.7.6</ecNumber>
    </recommendedName>
</protein>
<feature type="transit peptide" description="Mitochondrion" evidence="2">
    <location>
        <begin position="1"/>
        <end position="73"/>
    </location>
</feature>
<feature type="chain" id="PRO_0000031076" description="DNA-directed RNA polymerase, mitochondrial">
    <location>
        <begin position="74"/>
        <end position="1423"/>
    </location>
</feature>
<feature type="region of interest" description="Disordered" evidence="5">
    <location>
        <begin position="266"/>
        <end position="303"/>
    </location>
</feature>
<feature type="region of interest" description="Disordered" evidence="5">
    <location>
        <begin position="1055"/>
        <end position="1087"/>
    </location>
</feature>
<feature type="region of interest" description="Disordered" evidence="5">
    <location>
        <begin position="1316"/>
        <end position="1342"/>
    </location>
</feature>
<feature type="compositionally biased region" description="Low complexity" evidence="5">
    <location>
        <begin position="278"/>
        <end position="297"/>
    </location>
</feature>
<feature type="compositionally biased region" description="Basic and acidic residues" evidence="5">
    <location>
        <begin position="1055"/>
        <end position="1064"/>
    </location>
</feature>
<feature type="compositionally biased region" description="Acidic residues" evidence="5">
    <location>
        <begin position="1322"/>
        <end position="1336"/>
    </location>
</feature>
<feature type="active site" evidence="1">
    <location>
        <position position="901"/>
    </location>
</feature>
<feature type="active site" evidence="1">
    <location>
        <position position="970"/>
    </location>
</feature>
<feature type="active site" evidence="1">
    <location>
        <position position="1180"/>
    </location>
</feature>
<feature type="sequence conflict" description="In Ref. 1; AAA33587." evidence="6" ref="1">
    <original>L</original>
    <variation>F</variation>
    <location>
        <position position="311"/>
    </location>
</feature>
<feature type="sequence conflict" description="In Ref. 1; AAA33587." evidence="6" ref="1">
    <original>GGA</original>
    <variation>RS</variation>
    <location>
        <begin position="468"/>
        <end position="470"/>
    </location>
</feature>
<feature type="sequence conflict" description="In Ref. 1; AAA33587." evidence="6" ref="1">
    <original>LH</original>
    <variation>FD</variation>
    <location>
        <begin position="752"/>
        <end position="753"/>
    </location>
</feature>
<sequence length="1423" mass="159660">MLPRTASATRTPHLNRLVSAGSRRVLPRCSSSLGIRGSLAATPRLLSTITTQQPSPLKRQPAPRATVGFERHLATVLDEPAQTATTPLYELRSFSPQAPLTVRDHTKVYAKQRVNYHGIPGDVNEMFLVFEACLQVGRLERAAQVLKRLANLDVVPPADYLDLFNQYLDAKVSQLLQEPDVDKADDIHKAFETMVSDGRELPVGGETVALLLKASLTSTDPETMQRYVTRYLSLLPTQIALETVFNTEILTYEELTKVAELCPKYNMPDNVDPDTFAQQQQQQQQQQQQQQEQQQQQDTSIDQSEVSIEPLLTSSEPSAIPEVLGTPQKGFGLQFVKRTVSMFKDIPDGFDISTLPMSQQREIQSKLEKDCVDASLARWREENESLQKMGLNTSLDTPSLNSRLYQWQKDLETRLRTMLVEVEKSEMVSKKNKDDLDRCIYGPFIRQSNPERLAAVTIISTLSSLAMGGAHKGSTIASLITHIAKFAEEDIRVQKAEALISKRNLRKAKSKQHNPRSVLRFKNSTASAGSSDMADSNNVAVEMDDEAWTTTIRTKVGAALLSALLDTAKITLVREDPVTKTLITQNQPAFSHVMQLRKGKKIGTIIPNKAVVELLVREPVPDFLARHLPMVTPPDPWVSFEKGAYLETKTPVLRLKNGEREQRLYTEAAIARGDMDQVFKGLDVLGKTGWKINSPVFKVMLDVWNSGKQVANIPPLDPIFDLPPEPASTEDPTVKRAWLKEIKVIENERSGLHSQRCFMNFQLEIARAYRDQTFYFPHNVDFRGRAYPIPPYLNHMGADHVRGLMLFAKGKPLGESGLRWLKVHLANVYGFDKASLQERQDFADENIENIRDSVNNPLNGNQWWLQAEDPWQCLATCFELAAALELEDPTKYVSHLPIHQDGTCNGLQHYAALGGDTWGAQQVNLVPGDRPADVYSAVAKLVIKGIEDDLAKDNEFAKAMHGKITRKVVKQTVMTNVYGVTYVGARKQVLKQIEAAYPNITAESGIEAALLASYVTQHIFRAMSTMFKGAHDIQNWLGEIGGRVCRALTPEQLDEFERSERSPHGDGTASGENITLAGNPRKSSAHKNDEILNNFQSTIIWTTPLRMPVVQPYRKHGTKTVSTCMQDLVMTIPERSDPVNRRKQLQAFPPNFIHSLDASHMILSALHCDELGLTFAAVHDSFWTHASDIDSMNAVLRDAFIRIHSEDVIGRLAAEFQARYKNSLYLAKIETGTKVAQEIQRWRVRNKLGPRKELLLEKERQELLRSSNPEDVERGKKMISPASLYELYSSAEDLTVPEDLKEVTIGNLAGVEETKVRRGREMDEEGEVDGSEEAVEHEDGMHEDEMLADEPRDMDGNSGLDELSELRNTNHFALSQKRAKASIASGGKQKHYLDIWLPLVFPPIPEKGDFDVRSLKDSTYFFS</sequence>